<proteinExistence type="inferred from homology"/>
<dbReference type="EC" id="5.4.3.8" evidence="1"/>
<dbReference type="EMBL" id="AM286415">
    <property type="protein sequence ID" value="CAL10838.1"/>
    <property type="molecule type" value="Genomic_DNA"/>
</dbReference>
<dbReference type="RefSeq" id="WP_005167221.1">
    <property type="nucleotide sequence ID" value="NC_008800.1"/>
</dbReference>
<dbReference type="RefSeq" id="YP_001005078.1">
    <property type="nucleotide sequence ID" value="NC_008800.1"/>
</dbReference>
<dbReference type="SMR" id="A1JJQ1"/>
<dbReference type="KEGG" id="yen:YE0734"/>
<dbReference type="PATRIC" id="fig|393305.7.peg.827"/>
<dbReference type="eggNOG" id="COG0001">
    <property type="taxonomic scope" value="Bacteria"/>
</dbReference>
<dbReference type="HOGENOM" id="CLU_016922_1_5_6"/>
<dbReference type="OrthoDB" id="9801052at2"/>
<dbReference type="UniPathway" id="UPA00251">
    <property type="reaction ID" value="UER00317"/>
</dbReference>
<dbReference type="Proteomes" id="UP000000642">
    <property type="component" value="Chromosome"/>
</dbReference>
<dbReference type="GO" id="GO:0005737">
    <property type="term" value="C:cytoplasm"/>
    <property type="evidence" value="ECO:0007669"/>
    <property type="project" value="UniProtKB-SubCell"/>
</dbReference>
<dbReference type="GO" id="GO:0042286">
    <property type="term" value="F:glutamate-1-semialdehyde 2,1-aminomutase activity"/>
    <property type="evidence" value="ECO:0007669"/>
    <property type="project" value="UniProtKB-UniRule"/>
</dbReference>
<dbReference type="GO" id="GO:0030170">
    <property type="term" value="F:pyridoxal phosphate binding"/>
    <property type="evidence" value="ECO:0007669"/>
    <property type="project" value="InterPro"/>
</dbReference>
<dbReference type="GO" id="GO:0008483">
    <property type="term" value="F:transaminase activity"/>
    <property type="evidence" value="ECO:0007669"/>
    <property type="project" value="InterPro"/>
</dbReference>
<dbReference type="GO" id="GO:0006782">
    <property type="term" value="P:protoporphyrinogen IX biosynthetic process"/>
    <property type="evidence" value="ECO:0007669"/>
    <property type="project" value="UniProtKB-UniRule"/>
</dbReference>
<dbReference type="CDD" id="cd00610">
    <property type="entry name" value="OAT_like"/>
    <property type="match status" value="1"/>
</dbReference>
<dbReference type="FunFam" id="3.40.640.10:FF:000021">
    <property type="entry name" value="Glutamate-1-semialdehyde 2,1-aminomutase"/>
    <property type="match status" value="1"/>
</dbReference>
<dbReference type="FunFam" id="3.90.1150.10:FF:000012">
    <property type="entry name" value="Glutamate-1-semialdehyde 2,1-aminomutase"/>
    <property type="match status" value="1"/>
</dbReference>
<dbReference type="Gene3D" id="3.90.1150.10">
    <property type="entry name" value="Aspartate Aminotransferase, domain 1"/>
    <property type="match status" value="1"/>
</dbReference>
<dbReference type="Gene3D" id="3.40.640.10">
    <property type="entry name" value="Type I PLP-dependent aspartate aminotransferase-like (Major domain)"/>
    <property type="match status" value="1"/>
</dbReference>
<dbReference type="HAMAP" id="MF_00375">
    <property type="entry name" value="HemL_aminotrans_3"/>
    <property type="match status" value="1"/>
</dbReference>
<dbReference type="InterPro" id="IPR004639">
    <property type="entry name" value="4pyrrol_synth_GluAld_NH2Trfase"/>
</dbReference>
<dbReference type="InterPro" id="IPR005814">
    <property type="entry name" value="Aminotrans_3"/>
</dbReference>
<dbReference type="InterPro" id="IPR049704">
    <property type="entry name" value="Aminotrans_3_PPA_site"/>
</dbReference>
<dbReference type="InterPro" id="IPR015424">
    <property type="entry name" value="PyrdxlP-dep_Trfase"/>
</dbReference>
<dbReference type="InterPro" id="IPR015421">
    <property type="entry name" value="PyrdxlP-dep_Trfase_major"/>
</dbReference>
<dbReference type="InterPro" id="IPR015422">
    <property type="entry name" value="PyrdxlP-dep_Trfase_small"/>
</dbReference>
<dbReference type="NCBIfam" id="TIGR00713">
    <property type="entry name" value="hemL"/>
    <property type="match status" value="1"/>
</dbReference>
<dbReference type="NCBIfam" id="NF000818">
    <property type="entry name" value="PRK00062.1"/>
    <property type="match status" value="1"/>
</dbReference>
<dbReference type="PANTHER" id="PTHR43713">
    <property type="entry name" value="GLUTAMATE-1-SEMIALDEHYDE 2,1-AMINOMUTASE"/>
    <property type="match status" value="1"/>
</dbReference>
<dbReference type="PANTHER" id="PTHR43713:SF3">
    <property type="entry name" value="GLUTAMATE-1-SEMIALDEHYDE 2,1-AMINOMUTASE 1, CHLOROPLASTIC-RELATED"/>
    <property type="match status" value="1"/>
</dbReference>
<dbReference type="Pfam" id="PF00202">
    <property type="entry name" value="Aminotran_3"/>
    <property type="match status" value="1"/>
</dbReference>
<dbReference type="SUPFAM" id="SSF53383">
    <property type="entry name" value="PLP-dependent transferases"/>
    <property type="match status" value="1"/>
</dbReference>
<dbReference type="PROSITE" id="PS00600">
    <property type="entry name" value="AA_TRANSFER_CLASS_3"/>
    <property type="match status" value="1"/>
</dbReference>
<keyword id="KW-0963">Cytoplasm</keyword>
<keyword id="KW-0413">Isomerase</keyword>
<keyword id="KW-0627">Porphyrin biosynthesis</keyword>
<keyword id="KW-0663">Pyridoxal phosphate</keyword>
<accession>A1JJQ1</accession>
<name>GSA_YERE8</name>
<reference key="1">
    <citation type="journal article" date="2006" name="PLoS Genet.">
        <title>The complete genome sequence and comparative genome analysis of the high pathogenicity Yersinia enterocolitica strain 8081.</title>
        <authorList>
            <person name="Thomson N.R."/>
            <person name="Howard S."/>
            <person name="Wren B.W."/>
            <person name="Holden M.T.G."/>
            <person name="Crossman L."/>
            <person name="Challis G.L."/>
            <person name="Churcher C."/>
            <person name="Mungall K."/>
            <person name="Brooks K."/>
            <person name="Chillingworth T."/>
            <person name="Feltwell T."/>
            <person name="Abdellah Z."/>
            <person name="Hauser H."/>
            <person name="Jagels K."/>
            <person name="Maddison M."/>
            <person name="Moule S."/>
            <person name="Sanders M."/>
            <person name="Whitehead S."/>
            <person name="Quail M.A."/>
            <person name="Dougan G."/>
            <person name="Parkhill J."/>
            <person name="Prentice M.B."/>
        </authorList>
    </citation>
    <scope>NUCLEOTIDE SEQUENCE [LARGE SCALE GENOMIC DNA]</scope>
    <source>
        <strain>NCTC 13174 / 8081</strain>
    </source>
</reference>
<comment type="catalytic activity">
    <reaction evidence="1">
        <text>(S)-4-amino-5-oxopentanoate = 5-aminolevulinate</text>
        <dbReference type="Rhea" id="RHEA:14265"/>
        <dbReference type="ChEBI" id="CHEBI:57501"/>
        <dbReference type="ChEBI" id="CHEBI:356416"/>
        <dbReference type="EC" id="5.4.3.8"/>
    </reaction>
</comment>
<comment type="cofactor">
    <cofactor evidence="1">
        <name>pyridoxal 5'-phosphate</name>
        <dbReference type="ChEBI" id="CHEBI:597326"/>
    </cofactor>
</comment>
<comment type="pathway">
    <text evidence="1">Porphyrin-containing compound metabolism; protoporphyrin-IX biosynthesis; 5-aminolevulinate from L-glutamyl-tRNA(Glu): step 2/2.</text>
</comment>
<comment type="subunit">
    <text evidence="1">Homodimer.</text>
</comment>
<comment type="subcellular location">
    <subcellularLocation>
        <location evidence="1">Cytoplasm</location>
    </subcellularLocation>
</comment>
<comment type="similarity">
    <text evidence="1">Belongs to the class-III pyridoxal-phosphate-dependent aminotransferase family. HemL subfamily.</text>
</comment>
<protein>
    <recommendedName>
        <fullName evidence="1">Glutamate-1-semialdehyde 2,1-aminomutase</fullName>
        <shortName evidence="1">GSA</shortName>
        <ecNumber evidence="1">5.4.3.8</ecNumber>
    </recommendedName>
    <alternativeName>
        <fullName evidence="1">Glutamate-1-semialdehyde aminotransferase</fullName>
        <shortName evidence="1">GSA-AT</shortName>
    </alternativeName>
</protein>
<feature type="chain" id="PRO_0000300959" description="Glutamate-1-semialdehyde 2,1-aminomutase">
    <location>
        <begin position="1"/>
        <end position="426"/>
    </location>
</feature>
<feature type="modified residue" description="N6-(pyridoxal phosphate)lysine" evidence="1">
    <location>
        <position position="265"/>
    </location>
</feature>
<gene>
    <name evidence="1" type="primary">hemL</name>
    <name type="ordered locus">YE0734</name>
</gene>
<evidence type="ECO:0000255" key="1">
    <source>
        <dbReference type="HAMAP-Rule" id="MF_00375"/>
    </source>
</evidence>
<organism>
    <name type="scientific">Yersinia enterocolitica serotype O:8 / biotype 1B (strain NCTC 13174 / 8081)</name>
    <dbReference type="NCBI Taxonomy" id="393305"/>
    <lineage>
        <taxon>Bacteria</taxon>
        <taxon>Pseudomonadati</taxon>
        <taxon>Pseudomonadota</taxon>
        <taxon>Gammaproteobacteria</taxon>
        <taxon>Enterobacterales</taxon>
        <taxon>Yersiniaceae</taxon>
        <taxon>Yersinia</taxon>
    </lineage>
</organism>
<sequence length="426" mass="45529">MSKSESLYAQAKQLIPGGVNSPVRAFTGVGGVPLFIERADGAYLFDVDGKAYIDYVGSWGPMVLGHNHPAIRQAVIEAVERGLSFGAPTEMEVKMAELVTNLVPTMDMVRMVNSGTEATMSAIRLARGFTGRDKIIKFEGCYHGHADCLLVKAGSGALTLGQPNSPGVPADFAKHTLTCTYNDLASVREAFEQYPRDIACIIVEPVAGNMNCVPPLPEFLPGLRALCDKFGALLIIDEVMTGFRVALAGAQDYYNVIPDLTCLGKIIGGGMPVGAFGGRRDVMDALAPTGPVYQAGTLSGNPIAMAAGFACLTEVAQVGIHETLTELTNLLADGLLDAAKAENIPLVVNHVGGMFGLFFTDAPTVTCYQDVMNCDVERFKRFFHLMLEEGVYLAPSAFEAGFMSVAHSKEDIQKTVDAARRCFAKL</sequence>